<name>GERXB_BACAN</name>
<protein>
    <recommendedName>
        <fullName>Spore germination protein XB</fullName>
    </recommendedName>
</protein>
<organism>
    <name type="scientific">Bacillus anthracis</name>
    <dbReference type="NCBI Taxonomy" id="1392"/>
    <lineage>
        <taxon>Bacteria</taxon>
        <taxon>Bacillati</taxon>
        <taxon>Bacillota</taxon>
        <taxon>Bacilli</taxon>
        <taxon>Bacillales</taxon>
        <taxon>Bacillaceae</taxon>
        <taxon>Bacillus</taxon>
        <taxon>Bacillus cereus group</taxon>
    </lineage>
</organism>
<feature type="chain" id="PRO_0000054257" description="Spore germination protein XB">
    <location>
        <begin position="1"/>
        <end position="355"/>
    </location>
</feature>
<feature type="transmembrane region" description="Helical" evidence="1">
    <location>
        <begin position="2"/>
        <end position="24"/>
    </location>
</feature>
<feature type="transmembrane region" description="Helical" evidence="1">
    <location>
        <begin position="34"/>
        <end position="56"/>
    </location>
</feature>
<feature type="transmembrane region" description="Helical" evidence="1">
    <location>
        <begin position="69"/>
        <end position="91"/>
    </location>
</feature>
<feature type="transmembrane region" description="Helical" evidence="1">
    <location>
        <begin position="106"/>
        <end position="128"/>
    </location>
</feature>
<feature type="transmembrane region" description="Helical" evidence="1">
    <location>
        <begin position="135"/>
        <end position="157"/>
    </location>
</feature>
<feature type="transmembrane region" description="Helical" evidence="1">
    <location>
        <begin position="180"/>
        <end position="197"/>
    </location>
</feature>
<feature type="transmembrane region" description="Helical" evidence="1">
    <location>
        <begin position="210"/>
        <end position="232"/>
    </location>
</feature>
<feature type="transmembrane region" description="Helical" evidence="1">
    <location>
        <begin position="265"/>
        <end position="287"/>
    </location>
</feature>
<feature type="transmembrane region" description="Helical" evidence="1">
    <location>
        <begin position="299"/>
        <end position="321"/>
    </location>
</feature>
<feature type="transmembrane region" description="Helical" evidence="1">
    <location>
        <begin position="326"/>
        <end position="348"/>
    </location>
</feature>
<dbReference type="EMBL" id="AF108144">
    <property type="protein sequence ID" value="AAC99414.1"/>
    <property type="status" value="ALT_INIT"/>
    <property type="molecule type" value="Genomic_DNA"/>
</dbReference>
<dbReference type="EMBL" id="AF065404">
    <property type="protein sequence ID" value="AAD32418.1"/>
    <property type="status" value="ALT_INIT"/>
    <property type="molecule type" value="Genomic_DNA"/>
</dbReference>
<dbReference type="EMBL" id="AE011190">
    <property type="protein sequence ID" value="AAM26101.1"/>
    <property type="molecule type" value="Genomic_DNA"/>
</dbReference>
<dbReference type="EMBL" id="AE017336">
    <property type="protein sequence ID" value="AAT28897.2"/>
    <property type="molecule type" value="Genomic_DNA"/>
</dbReference>
<dbReference type="EMBL" id="AJ413932">
    <property type="protein sequence ID" value="CAC93926.1"/>
    <property type="status" value="ALT_INIT"/>
    <property type="molecule type" value="Genomic_DNA"/>
</dbReference>
<dbReference type="EMBL" id="AJ413933">
    <property type="protein sequence ID" value="CAC93929.1"/>
    <property type="status" value="ALT_INIT"/>
    <property type="molecule type" value="Genomic_DNA"/>
</dbReference>
<dbReference type="PIR" id="B59105">
    <property type="entry name" value="B59105"/>
</dbReference>
<dbReference type="RefSeq" id="NP_052810.1">
    <property type="nucleotide sequence ID" value="NC_001496.1"/>
</dbReference>
<dbReference type="SMR" id="Q9ZFB5"/>
<dbReference type="KEGG" id="bar:GBAA_pXO1_0156"/>
<dbReference type="HOGENOM" id="CLU_047547_1_2_9"/>
<dbReference type="Proteomes" id="UP000000594">
    <property type="component" value="Plasmid pXO1"/>
</dbReference>
<dbReference type="GO" id="GO:0005886">
    <property type="term" value="C:plasma membrane"/>
    <property type="evidence" value="ECO:0007669"/>
    <property type="project" value="UniProtKB-SubCell"/>
</dbReference>
<dbReference type="GO" id="GO:0006865">
    <property type="term" value="P:amino acid transport"/>
    <property type="evidence" value="ECO:0007669"/>
    <property type="project" value="UniProtKB-KW"/>
</dbReference>
<dbReference type="GO" id="GO:0009847">
    <property type="term" value="P:spore germination"/>
    <property type="evidence" value="ECO:0007669"/>
    <property type="project" value="InterPro"/>
</dbReference>
<dbReference type="InterPro" id="IPR004761">
    <property type="entry name" value="Spore_GerAB"/>
</dbReference>
<dbReference type="NCBIfam" id="TIGR00912">
    <property type="entry name" value="2A0309"/>
    <property type="match status" value="1"/>
</dbReference>
<dbReference type="PANTHER" id="PTHR34975">
    <property type="entry name" value="SPORE GERMINATION PROTEIN A2"/>
    <property type="match status" value="1"/>
</dbReference>
<dbReference type="PANTHER" id="PTHR34975:SF2">
    <property type="entry name" value="SPORE GERMINATION PROTEIN A2"/>
    <property type="match status" value="1"/>
</dbReference>
<dbReference type="Pfam" id="PF03845">
    <property type="entry name" value="Spore_permease"/>
    <property type="match status" value="1"/>
</dbReference>
<keyword id="KW-0029">Amino-acid transport</keyword>
<keyword id="KW-1003">Cell membrane</keyword>
<keyword id="KW-0309">Germination</keyword>
<keyword id="KW-0472">Membrane</keyword>
<keyword id="KW-0614">Plasmid</keyword>
<keyword id="KW-1185">Reference proteome</keyword>
<keyword id="KW-0812">Transmembrane</keyword>
<keyword id="KW-1133">Transmembrane helix</keyword>
<keyword id="KW-0813">Transport</keyword>
<keyword id="KW-0843">Virulence</keyword>
<comment type="function">
    <text>May allow B.anthracis to germinate within phagocytic cells and therefore involved in virulence.</text>
</comment>
<comment type="subcellular location">
    <subcellularLocation>
        <location>Cell membrane</location>
        <topology>Multi-pass membrane protein</topology>
    </subcellularLocation>
</comment>
<comment type="similarity">
    <text evidence="2">Belongs to the amino acid-polyamine-organocation (APC) superfamily. Spore germination protein (SGP) (TC 2.A.3.9) family.</text>
</comment>
<comment type="sequence caution" evidence="2">
    <conflict type="erroneous initiation">
        <sequence resource="EMBL-CDS" id="AAC99414"/>
    </conflict>
</comment>
<comment type="sequence caution" evidence="2">
    <conflict type="erroneous initiation">
        <sequence resource="EMBL-CDS" id="AAD32418"/>
    </conflict>
</comment>
<comment type="sequence caution" evidence="2">
    <conflict type="erroneous initiation">
        <sequence resource="EMBL-CDS" id="CAC93926"/>
    </conflict>
</comment>
<comment type="sequence caution" evidence="2">
    <conflict type="erroneous initiation">
        <sequence resource="EMBL-CDS" id="CAC93929"/>
    </conflict>
</comment>
<reference key="1">
    <citation type="journal article" date="1999" name="Mol. Microbiol.">
        <title>Identification and characterization of a germination operon on the virulence plasmid pXO1 of Bacillus anthracis.</title>
        <authorList>
            <person name="Guidi-Rontani C."/>
            <person name="Pereira Y."/>
            <person name="Ruffie S."/>
            <person name="Sirard J.-C."/>
            <person name="Weber-Levy M."/>
            <person name="Mock M."/>
        </authorList>
    </citation>
    <scope>NUCLEOTIDE SEQUENCE [GENOMIC DNA]</scope>
    <source>
        <strain>Sterne</strain>
    </source>
</reference>
<reference key="2">
    <citation type="journal article" date="1999" name="J. Bacteriol.">
        <title>Sequence and organization of pXO1, the large Bacillus anthracis plasmid harboring the anthrax toxin genes.</title>
        <authorList>
            <person name="Okinaka R.T."/>
            <person name="Cloud K."/>
            <person name="Hampton O."/>
            <person name="Hoffmaster A.R."/>
            <person name="Hill K.K."/>
            <person name="Keim P."/>
            <person name="Koehler T.M."/>
            <person name="Lamke G."/>
            <person name="Kumano S."/>
            <person name="Mahillon J."/>
            <person name="Manter D."/>
            <person name="Martinez Y."/>
            <person name="Ricke D."/>
            <person name="Svensson R."/>
            <person name="Jackson P.J."/>
        </authorList>
    </citation>
    <scope>NUCLEOTIDE SEQUENCE [LARGE SCALE GENOMIC DNA]</scope>
    <source>
        <strain>Sterne</strain>
    </source>
</reference>
<reference key="3">
    <citation type="journal article" date="2002" name="Science">
        <title>Comparative genome sequencing for discovery of novel polymorphisms in Bacillus anthracis.</title>
        <authorList>
            <person name="Read T.D."/>
            <person name="Salzberg S.L."/>
            <person name="Pop M."/>
            <person name="Shumway M.F."/>
            <person name="Umayam L."/>
            <person name="Jiang L."/>
            <person name="Holtzapple E."/>
            <person name="Busch J.D."/>
            <person name="Smith K.L."/>
            <person name="Schupp J.M."/>
            <person name="Solomon D."/>
            <person name="Keim P."/>
            <person name="Fraser C.M."/>
        </authorList>
    </citation>
    <scope>NUCLEOTIDE SEQUENCE [GENOMIC DNA]</scope>
    <source>
        <strain>Ames / isolate Florida / A2012</strain>
    </source>
</reference>
<reference key="4">
    <citation type="journal article" date="2009" name="J. Bacteriol.">
        <title>The complete genome sequence of Bacillus anthracis Ames 'Ancestor'.</title>
        <authorList>
            <person name="Ravel J."/>
            <person name="Jiang L."/>
            <person name="Stanley S.T."/>
            <person name="Wilson M.R."/>
            <person name="Decker R.S."/>
            <person name="Read T.D."/>
            <person name="Worsham P."/>
            <person name="Keim P.S."/>
            <person name="Salzberg S.L."/>
            <person name="Fraser-Liggett C.M."/>
            <person name="Rasko D.A."/>
        </authorList>
    </citation>
    <scope>NUCLEOTIDE SEQUENCE [LARGE SCALE GENOMIC DNA]</scope>
    <source>
        <strain>Ames ancestor</strain>
    </source>
</reference>
<reference key="5">
    <citation type="journal article" date="2002" name="J. Appl. Microbiol.">
        <title>Sequence analysis of the genes encoding for the major virulence factors of Bacillus anthracis vaccine strain 'Carbosap'.</title>
        <authorList>
            <person name="Adone R."/>
            <person name="Pasquali P."/>
            <person name="La Rosa G."/>
            <person name="Marianelli C."/>
            <person name="Muscillo M."/>
            <person name="Fasanella A."/>
            <person name="Francia M."/>
            <person name="Ciuchini F."/>
        </authorList>
    </citation>
    <scope>NUCLEOTIDE SEQUENCE [GENOMIC DNA]</scope>
    <source>
        <strain>Carbosap</strain>
        <strain>Ferrara</strain>
    </source>
</reference>
<accession>Q9ZFB5</accession>
<accession>Q8KYK7</accession>
<proteinExistence type="inferred from homology"/>
<geneLocation type="plasmid">
    <name>pXO1</name>
</geneLocation>
<sequence length="355" mass="40408">MVNFFQIALVLIGSTGIINHVIIIPMLLDHSGRDSWISIIILSLVYIIWIPCVFIVHKYTREEHLFSWLMRNYGGFITYPLLSIIVLYLIILGTVTLKETLTFFSFYLPETPRILLGVLLSIICFYNIQRGVQSIALTTGILLPVVFLLGFFVMIANFPHKDYSLLKPIMEHGMDPVIKGMIYPAAGFVELIFILFLQHHIGSKIKLSQLIIVGIILAGITLGPTIAAIVEFGPFVAANQRYPTFEEWRLVSIGKYIEHLDFLSVYQWLVGVFIRISLVIFLIPDVLQVTKQKARNQIISILLICMVIICILPISDASFYWFLSHVFLPISAIGLFLFSMLLLVFVWVSKNKKRA</sequence>
<evidence type="ECO:0000255" key="1"/>
<evidence type="ECO:0000305" key="2"/>
<gene>
    <name type="primary">gerXB</name>
    <name type="ordered locus">pXO1-114</name>
    <name type="ordered locus">BXA0156</name>
    <name type="ordered locus">GBAA_pXO1_0156</name>
</gene>